<feature type="signal peptide" evidence="1">
    <location>
        <begin position="1"/>
        <end position="21"/>
    </location>
</feature>
<feature type="chain" id="PRO_5001705258" description="T cell receptor beta variable 19" evidence="1">
    <location>
        <begin position="22"/>
        <end position="114"/>
    </location>
</feature>
<feature type="domain" description="Ig-like" evidence="2">
    <location>
        <begin position="22"/>
        <end position="114" status="greater than"/>
    </location>
</feature>
<feature type="glycosylation site" description="N-linked (GlcNAc...) asparagine" evidence="1">
    <location>
        <position position="37"/>
    </location>
</feature>
<feature type="disulfide bond" evidence="2 4 12 13">
    <location>
        <begin position="42"/>
        <end position="110"/>
    </location>
</feature>
<feature type="non-terminal residue">
    <location>
        <position position="114"/>
    </location>
</feature>
<feature type="strand" evidence="15">
    <location>
        <begin position="23"/>
        <end position="26"/>
    </location>
</feature>
<feature type="strand" evidence="14">
    <location>
        <begin position="28"/>
        <end position="33"/>
    </location>
</feature>
<feature type="strand" evidence="14">
    <location>
        <begin position="38"/>
        <end position="40"/>
    </location>
</feature>
<feature type="strand" evidence="14">
    <location>
        <begin position="49"/>
        <end position="56"/>
    </location>
</feature>
<feature type="strand" evidence="14">
    <location>
        <begin position="63"/>
        <end position="70"/>
    </location>
</feature>
<feature type="strand" evidence="14">
    <location>
        <begin position="73"/>
        <end position="76"/>
    </location>
</feature>
<feature type="strand" evidence="14">
    <location>
        <begin position="83"/>
        <end position="85"/>
    </location>
</feature>
<feature type="strand" evidence="15">
    <location>
        <begin position="88"/>
        <end position="92"/>
    </location>
</feature>
<feature type="strand" evidence="14">
    <location>
        <begin position="95"/>
        <end position="97"/>
    </location>
</feature>
<feature type="strand" evidence="14">
    <location>
        <begin position="106"/>
        <end position="113"/>
    </location>
</feature>
<protein>
    <recommendedName>
        <fullName evidence="10">T cell receptor beta variable 19</fullName>
    </recommendedName>
</protein>
<comment type="function">
    <text evidence="5 7 8 9">V region of the variable domain of T cell receptor (TR) beta chain that participates in the antigen recognition (PubMed:24600447). Alpha-beta T cell receptors are antigen specific receptors which are essential to the immune response and are present on the cell surface of T lymphocytes. Recognize peptide-major histocompatibility (MH) (pMH) complexes that are displayed by antigen presenting cells (APC), a prerequisite for efficient T cell adaptive immunity against pathogens (PubMed:25493333). Binding of alpha-beta TR to pMH complex initiates TR-CD3 clustering on the cell surface and intracellular activation of LCK that phosphorylates the ITAM motifs of CD3G, CD3D, CD3E and CD247 enabling the recruitment of ZAP70. In turn ZAP70 phosphorylates LAT, which recruits numerous signaling molecules to form the LAT signalosome. The LAT signalosome propagates signal branching to three major signaling pathways, the calcium, the mitogen-activated protein kinase (MAPK) kinase and the nuclear factor NF-kappa-B (NF-kB) pathways, leading to the mobilization of transcription factors that are critical for gene expression and essential for T cell growth and differentiation (PubMed:23524462). The T cell repertoire is generated in the thymus, by V-(D)-J rearrangement. This repertoire is then shaped by intrathymic selection events to generate a peripheral T cell pool of self-MH restricted, non-autoaggressive T cells. Post-thymic interaction of alpha-beta TR with the pMH complexes shapes TR structural and functional avidity (PubMed:15040585).</text>
</comment>
<comment type="subunit">
    <text evidence="6">Alpha-beta TR is a heterodimer composed of an alpha and beta chain; disulfide-linked. The alpha-beta TR is associated with the transmembrane signaling CD3 coreceptor proteins to form the TR-CD3 (TcR or TCR). The assembly of alpha-beta TR heterodimers with CD3 occurs in the endoplasmic reticulum where a single alpha-beta TR heterodimer associates with one CD3D-CD3E heterodimer, one CD3G-CD3E heterodimer and one CD247 homodimer forming a stable octameric structure. CD3D-CD3E and CD3G-CD3E heterodimers preferentially associate with TR alpha and TR beta chains, respectively. The association of the CD247 homodimer is the last step of TcR assembly in the endoplasmic reticulum and is required for transport to the cell surface.</text>
</comment>
<comment type="subunit">
    <text evidence="3">(Microbial infection) Interacts with Staphylococcus aureus enterotoxin type B/SEB.</text>
</comment>
<comment type="subcellular location">
    <subcellularLocation>
        <location evidence="6">Cell membrane</location>
    </subcellularLocation>
</comment>
<comment type="polymorphism">
    <text evidence="11">There are several alleles. The sequence shown is that of IMGT allele TRBV19*01.</text>
</comment>
<keyword id="KW-0002">3D-structure</keyword>
<keyword id="KW-1064">Adaptive immunity</keyword>
<keyword id="KW-1003">Cell membrane</keyword>
<keyword id="KW-1015">Disulfide bond</keyword>
<keyword id="KW-0325">Glycoprotein</keyword>
<keyword id="KW-0391">Immunity</keyword>
<keyword id="KW-0393">Immunoglobulin domain</keyword>
<keyword id="KW-0472">Membrane</keyword>
<keyword id="KW-1267">Proteomics identification</keyword>
<keyword id="KW-0675">Receptor</keyword>
<keyword id="KW-1185">Reference proteome</keyword>
<keyword id="KW-0732">Signal</keyword>
<keyword id="KW-1279">T cell receptor</keyword>
<reference key="1">
    <citation type="journal article" date="2003" name="Nature">
        <title>The DNA sequence of human chromosome 7.</title>
        <authorList>
            <person name="Hillier L.W."/>
            <person name="Fulton R.S."/>
            <person name="Fulton L.A."/>
            <person name="Graves T.A."/>
            <person name="Pepin K.H."/>
            <person name="Wagner-McPherson C."/>
            <person name="Layman D."/>
            <person name="Maas J."/>
            <person name="Jaeger S."/>
            <person name="Walker R."/>
            <person name="Wylie K."/>
            <person name="Sekhon M."/>
            <person name="Becker M.C."/>
            <person name="O'Laughlin M.D."/>
            <person name="Schaller M.E."/>
            <person name="Fewell G.A."/>
            <person name="Delehaunty K.D."/>
            <person name="Miner T.L."/>
            <person name="Nash W.E."/>
            <person name="Cordes M."/>
            <person name="Du H."/>
            <person name="Sun H."/>
            <person name="Edwards J."/>
            <person name="Bradshaw-Cordum H."/>
            <person name="Ali J."/>
            <person name="Andrews S."/>
            <person name="Isak A."/>
            <person name="Vanbrunt A."/>
            <person name="Nguyen C."/>
            <person name="Du F."/>
            <person name="Lamar B."/>
            <person name="Courtney L."/>
            <person name="Kalicki J."/>
            <person name="Ozersky P."/>
            <person name="Bielicki L."/>
            <person name="Scott K."/>
            <person name="Holmes A."/>
            <person name="Harkins R."/>
            <person name="Harris A."/>
            <person name="Strong C.M."/>
            <person name="Hou S."/>
            <person name="Tomlinson C."/>
            <person name="Dauphin-Kohlberg S."/>
            <person name="Kozlowicz-Reilly A."/>
            <person name="Leonard S."/>
            <person name="Rohlfing T."/>
            <person name="Rock S.M."/>
            <person name="Tin-Wollam A.-M."/>
            <person name="Abbott A."/>
            <person name="Minx P."/>
            <person name="Maupin R."/>
            <person name="Strowmatt C."/>
            <person name="Latreille P."/>
            <person name="Miller N."/>
            <person name="Johnson D."/>
            <person name="Murray J."/>
            <person name="Woessner J.P."/>
            <person name="Wendl M.C."/>
            <person name="Yang S.-P."/>
            <person name="Schultz B.R."/>
            <person name="Wallis J.W."/>
            <person name="Spieth J."/>
            <person name="Bieri T.A."/>
            <person name="Nelson J.O."/>
            <person name="Berkowicz N."/>
            <person name="Wohldmann P.E."/>
            <person name="Cook L.L."/>
            <person name="Hickenbotham M.T."/>
            <person name="Eldred J."/>
            <person name="Williams D."/>
            <person name="Bedell J.A."/>
            <person name="Mardis E.R."/>
            <person name="Clifton S.W."/>
            <person name="Chissoe S.L."/>
            <person name="Marra M.A."/>
            <person name="Raymond C."/>
            <person name="Haugen E."/>
            <person name="Gillett W."/>
            <person name="Zhou Y."/>
            <person name="James R."/>
            <person name="Phelps K."/>
            <person name="Iadanoto S."/>
            <person name="Bubb K."/>
            <person name="Simms E."/>
            <person name="Levy R."/>
            <person name="Clendenning J."/>
            <person name="Kaul R."/>
            <person name="Kent W.J."/>
            <person name="Furey T.S."/>
            <person name="Baertsch R.A."/>
            <person name="Brent M.R."/>
            <person name="Keibler E."/>
            <person name="Flicek P."/>
            <person name="Bork P."/>
            <person name="Suyama M."/>
            <person name="Bailey J.A."/>
            <person name="Portnoy M.E."/>
            <person name="Torrents D."/>
            <person name="Chinwalla A.T."/>
            <person name="Gish W.R."/>
            <person name="Eddy S.R."/>
            <person name="McPherson J.D."/>
            <person name="Olson M.V."/>
            <person name="Eichler E.E."/>
            <person name="Green E.D."/>
            <person name="Waterston R.H."/>
            <person name="Wilson R.K."/>
        </authorList>
    </citation>
    <scope>NUCLEOTIDE SEQUENCE [LARGE SCALE GENOMIC DNA] (IMGT ALLELE TRBV19*01)</scope>
</reference>
<reference key="2">
    <citation type="book" date="2001" name="The T Cell Receptor FactsBook.">
        <title>The T Cell Receptor FactsBook.</title>
        <editorList>
            <person name="Lefranc M.P."/>
            <person name="Lefranc G."/>
        </editorList>
        <authorList>
            <person name="Lefranc M.P."/>
            <person name="Lefranc G."/>
        </authorList>
    </citation>
    <scope>NOMENCLATURE</scope>
</reference>
<reference key="3">
    <citation type="journal article" date="2004" name="Nat. Rev. Immunol.">
        <title>The many important facets of T-cell repertoire diversity.</title>
        <authorList>
            <person name="Nikolich-Zugich J."/>
            <person name="Slifka M.K."/>
            <person name="Messaoudi I."/>
        </authorList>
    </citation>
    <scope>REVIEW ON T CELL REPERTOIRE DIVERSITY</scope>
</reference>
<reference key="4">
    <citation type="journal article" date="2010" name="Cold Spring Harb. Perspect. Biol.">
        <title>Structural biology of the T-cell receptor: insights into receptor assembly, ligand recognition, and initiation of signaling.</title>
        <authorList>
            <person name="Wucherpfennig K.W."/>
            <person name="Gagnon E."/>
            <person name="Call M.J."/>
            <person name="Huseby E.S."/>
            <person name="Call M.E."/>
        </authorList>
    </citation>
    <scope>REVIEW ON T CELL RECEPTOR-CD3 COMPLEX ASSEMBLY</scope>
    <scope>SUBCELLULAR LOCATION</scope>
</reference>
<reference key="5">
    <citation type="journal article" date="2013" name="Nat. Rev. Immunol.">
        <title>T cell receptor signalling networks: branched, diversified and bounded.</title>
        <authorList>
            <person name="Brownlie R.J."/>
            <person name="Zamoyska R."/>
        </authorList>
    </citation>
    <scope>REVIEW ON T CELL RECEPTOR SIGNALING</scope>
</reference>
<reference key="6">
    <citation type="journal article" date="2014" name="Front. Immunol.">
        <title>Immunoglobulin and T Cell Receptor Genes: IMGT((R)) and the Birth and Rise of Immunoinformatics.</title>
        <authorList>
            <person name="Lefranc M.P."/>
        </authorList>
    </citation>
    <scope>NOMENCLATURE</scope>
</reference>
<reference key="7">
    <citation type="journal article" date="2014" name="J. Immunol.">
        <title>Structure of the superantigen staphylococcal enterotoxin B in complex with TCR and peptide-MHC demonstrates absence of TCR-peptide contacts.</title>
        <authorList>
            <person name="Rodstrom K.E."/>
            <person name="Elbing K."/>
            <person name="Lindkvist-Petersson K."/>
        </authorList>
    </citation>
    <scope>INTERACTION WITH STAPHYLOCOCCUS AUREUS ENTEROTOXIN TYPE B/SEB (MICROBIAL INFECTION)</scope>
</reference>
<reference key="8">
    <citation type="journal article" date="2015" name="Annu. Rev. Immunol.">
        <title>T cell antigen receptor recognition of antigen-presenting molecules.</title>
        <authorList>
            <person name="Rossjohn J."/>
            <person name="Gras S."/>
            <person name="Miles J.J."/>
            <person name="Turner S.J."/>
            <person name="Godfrey D.I."/>
            <person name="McCluskey J."/>
        </authorList>
    </citation>
    <scope>REVIEW ON FUNCTION</scope>
</reference>
<reference evidence="12 13" key="9">
    <citation type="journal article" date="2016" name="Proc. Natl. Acad. Sci. U.S.A.">
        <title>Molecular basis for universal HLA-A*0201-restricted CD8+ T-cell immunity against influenza viruses.</title>
        <authorList>
            <person name="Valkenburg S.A."/>
            <person name="Josephs T.M."/>
            <person name="Clemens E.B."/>
            <person name="Grant E.J."/>
            <person name="Nguyen T.H."/>
            <person name="Wang G.C."/>
            <person name="Price D.A."/>
            <person name="Miller A."/>
            <person name="Tong S.Y."/>
            <person name="Thomas P.G."/>
            <person name="Doherty P.C."/>
            <person name="Rossjohn J."/>
            <person name="Gras S."/>
            <person name="Kedzierska K."/>
        </authorList>
    </citation>
    <scope>X-RAY CRYSTALLOGRAPHY (2.50 ANGSTROMS) OF 21-113</scope>
    <scope>DISULFIDE BONDS</scope>
</reference>
<organism>
    <name type="scientific">Homo sapiens</name>
    <name type="common">Human</name>
    <dbReference type="NCBI Taxonomy" id="9606"/>
    <lineage>
        <taxon>Eukaryota</taxon>
        <taxon>Metazoa</taxon>
        <taxon>Chordata</taxon>
        <taxon>Craniata</taxon>
        <taxon>Vertebrata</taxon>
        <taxon>Euteleostomi</taxon>
        <taxon>Mammalia</taxon>
        <taxon>Eutheria</taxon>
        <taxon>Euarchontoglires</taxon>
        <taxon>Primates</taxon>
        <taxon>Haplorrhini</taxon>
        <taxon>Catarrhini</taxon>
        <taxon>Hominidae</taxon>
        <taxon>Homo</taxon>
    </lineage>
</organism>
<evidence type="ECO:0000255" key="1"/>
<evidence type="ECO:0000255" key="2">
    <source>
        <dbReference type="PROSITE-ProRule" id="PRU00114"/>
    </source>
</evidence>
<evidence type="ECO:0000269" key="3">
    <source>
    </source>
</evidence>
<evidence type="ECO:0000269" key="4">
    <source>
    </source>
</evidence>
<evidence type="ECO:0000303" key="5">
    <source>
    </source>
</evidence>
<evidence type="ECO:0000303" key="6">
    <source>
    </source>
</evidence>
<evidence type="ECO:0000303" key="7">
    <source>
    </source>
</evidence>
<evidence type="ECO:0000303" key="8">
    <source>
    </source>
</evidence>
<evidence type="ECO:0000303" key="9">
    <source>
    </source>
</evidence>
<evidence type="ECO:0000303" key="10">
    <source ref="2"/>
</evidence>
<evidence type="ECO:0000305" key="11"/>
<evidence type="ECO:0007744" key="12">
    <source>
        <dbReference type="PDB" id="5HHM"/>
    </source>
</evidence>
<evidence type="ECO:0007744" key="13">
    <source>
        <dbReference type="PDB" id="5HHO"/>
    </source>
</evidence>
<evidence type="ECO:0007829" key="14">
    <source>
        <dbReference type="PDB" id="5HHM"/>
    </source>
</evidence>
<evidence type="ECO:0007829" key="15">
    <source>
        <dbReference type="PDB" id="5HHO"/>
    </source>
</evidence>
<accession>A0A075B6N1</accession>
<dbReference type="EMBL" id="AC244472">
    <property type="status" value="NOT_ANNOTATED_CDS"/>
    <property type="molecule type" value="Genomic_DNA"/>
</dbReference>
<dbReference type="PDB" id="5HHM">
    <property type="method" value="X-ray"/>
    <property type="resolution" value="2.50 A"/>
    <property type="chains" value="E/J=21-113"/>
</dbReference>
<dbReference type="PDB" id="5HHO">
    <property type="method" value="X-ray"/>
    <property type="resolution" value="2.95 A"/>
    <property type="chains" value="E=21-114"/>
</dbReference>
<dbReference type="PDB" id="5NQK">
    <property type="method" value="X-ray"/>
    <property type="resolution" value="3.25 A"/>
    <property type="chains" value="B=22-113"/>
</dbReference>
<dbReference type="PDBsum" id="5HHM"/>
<dbReference type="PDBsum" id="5HHO"/>
<dbReference type="PDBsum" id="5NQK"/>
<dbReference type="SMR" id="A0A075B6N1"/>
<dbReference type="FunCoup" id="A0A075B6N1">
    <property type="interactions" value="351"/>
</dbReference>
<dbReference type="IMGT_GENE-DB" id="TRBV19"/>
<dbReference type="GlyCosmos" id="A0A075B6N1">
    <property type="glycosylation" value="1 site, No reported glycans"/>
</dbReference>
<dbReference type="GlyGen" id="A0A075B6N1">
    <property type="glycosylation" value="1 site"/>
</dbReference>
<dbReference type="BioMuta" id="TRBV19"/>
<dbReference type="MassIVE" id="A0A075B6N1"/>
<dbReference type="Ensembl" id="ENST00000390393.3">
    <property type="protein sequence ID" value="ENSP00000374916.3"/>
    <property type="gene ID" value="ENSG00000211746.3"/>
</dbReference>
<dbReference type="UCSC" id="uc003vzo.4">
    <property type="organism name" value="human"/>
</dbReference>
<dbReference type="AGR" id="HGNC:12194"/>
<dbReference type="GeneCards" id="TRBV19"/>
<dbReference type="HGNC" id="HGNC:12194">
    <property type="gene designation" value="TRBV19"/>
</dbReference>
<dbReference type="HPA" id="ENSG00000211746">
    <property type="expression patterns" value="Tissue enriched (lymphoid)"/>
</dbReference>
<dbReference type="neXtProt" id="NX_A0A075B6N1"/>
<dbReference type="OpenTargets" id="ENSG00000211746"/>
<dbReference type="VEuPathDB" id="HostDB:ENSG00000211746"/>
<dbReference type="GeneTree" id="ENSGT00940000163545"/>
<dbReference type="HOGENOM" id="CLU_077975_9_2_1"/>
<dbReference type="InParanoid" id="A0A075B6N1"/>
<dbReference type="OMA" id="VHKCAQS"/>
<dbReference type="OrthoDB" id="9803478at2759"/>
<dbReference type="PAN-GO" id="A0A075B6N1">
    <property type="GO annotations" value="2 GO annotations based on evolutionary models"/>
</dbReference>
<dbReference type="ChiTaRS" id="TRBV19">
    <property type="organism name" value="human"/>
</dbReference>
<dbReference type="Pharos" id="A0A075B6N1">
    <property type="development level" value="Tdark"/>
</dbReference>
<dbReference type="PRO" id="PR:A0A075B6N1"/>
<dbReference type="Proteomes" id="UP000005640">
    <property type="component" value="Chromosome 7"/>
</dbReference>
<dbReference type="RNAct" id="A0A075B6N1">
    <property type="molecule type" value="protein"/>
</dbReference>
<dbReference type="Bgee" id="ENSG00000211746">
    <property type="expression patterns" value="Expressed in lymph node and 77 other cell types or tissues"/>
</dbReference>
<dbReference type="GO" id="GO:0042105">
    <property type="term" value="C:alpha-beta T cell receptor complex"/>
    <property type="evidence" value="ECO:0000314"/>
    <property type="project" value="UniProtKB"/>
</dbReference>
<dbReference type="GO" id="GO:0005886">
    <property type="term" value="C:plasma membrane"/>
    <property type="evidence" value="ECO:0000318"/>
    <property type="project" value="GO_Central"/>
</dbReference>
<dbReference type="GO" id="GO:0002250">
    <property type="term" value="P:adaptive immune response"/>
    <property type="evidence" value="ECO:0007669"/>
    <property type="project" value="UniProtKB-KW"/>
</dbReference>
<dbReference type="GO" id="GO:0007166">
    <property type="term" value="P:cell surface receptor signaling pathway"/>
    <property type="evidence" value="ECO:0000318"/>
    <property type="project" value="GO_Central"/>
</dbReference>
<dbReference type="Gene3D" id="2.60.40.10">
    <property type="entry name" value="Immunoglobulins"/>
    <property type="match status" value="1"/>
</dbReference>
<dbReference type="InterPro" id="IPR007110">
    <property type="entry name" value="Ig-like_dom"/>
</dbReference>
<dbReference type="InterPro" id="IPR036179">
    <property type="entry name" value="Ig-like_dom_sf"/>
</dbReference>
<dbReference type="InterPro" id="IPR013783">
    <property type="entry name" value="Ig-like_fold"/>
</dbReference>
<dbReference type="InterPro" id="IPR013106">
    <property type="entry name" value="Ig_V-set"/>
</dbReference>
<dbReference type="InterPro" id="IPR050413">
    <property type="entry name" value="TCR_beta_variable"/>
</dbReference>
<dbReference type="PANTHER" id="PTHR23268:SF28">
    <property type="entry name" value="T CELL RECEPTOR BETA VARIABLE 19"/>
    <property type="match status" value="1"/>
</dbReference>
<dbReference type="PANTHER" id="PTHR23268">
    <property type="entry name" value="T-CELL RECEPTOR BETA CHAIN"/>
    <property type="match status" value="1"/>
</dbReference>
<dbReference type="Pfam" id="PF07686">
    <property type="entry name" value="V-set"/>
    <property type="match status" value="1"/>
</dbReference>
<dbReference type="SMART" id="SM00406">
    <property type="entry name" value="IGv"/>
    <property type="match status" value="1"/>
</dbReference>
<dbReference type="SUPFAM" id="SSF48726">
    <property type="entry name" value="Immunoglobulin"/>
    <property type="match status" value="1"/>
</dbReference>
<dbReference type="PROSITE" id="PS50835">
    <property type="entry name" value="IG_LIKE"/>
    <property type="match status" value="1"/>
</dbReference>
<name>TVB19_HUMAN</name>
<gene>
    <name evidence="10" type="primary">TRBV19</name>
</gene>
<proteinExistence type="evidence at protein level"/>
<sequence>MSNQVLCCVVLCLLGANTVDGGITQSPKYLFRKEGQNVTLSCEQNLNHDAMYWYRQDPGQGLRLIYYSQIVNDFQKGDIAEGYSVSREKKESFPLTVTSAQKNPTAFYLCASSI</sequence>